<proteinExistence type="evidence at transcript level"/>
<protein>
    <recommendedName>
        <fullName evidence="1">GPN-loop GTPase 3</fullName>
        <ecNumber evidence="1">3.6.5.-</ecNumber>
    </recommendedName>
    <alternativeName>
        <fullName evidence="5">Factor of eukaryotic transcription 5</fullName>
    </alternativeName>
</protein>
<keyword id="KW-0963">Cytoplasm</keyword>
<keyword id="KW-0342">GTP-binding</keyword>
<keyword id="KW-0378">Hydrolase</keyword>
<keyword id="KW-0547">Nucleotide-binding</keyword>
<keyword id="KW-0539">Nucleus</keyword>
<keyword id="KW-1185">Reference proteome</keyword>
<organism>
    <name type="scientific">Schizosaccharomyces pombe (strain 972 / ATCC 24843)</name>
    <name type="common">Fission yeast</name>
    <dbReference type="NCBI Taxonomy" id="284812"/>
    <lineage>
        <taxon>Eukaryota</taxon>
        <taxon>Fungi</taxon>
        <taxon>Dikarya</taxon>
        <taxon>Ascomycota</taxon>
        <taxon>Taphrinomycotina</taxon>
        <taxon>Schizosaccharomycetes</taxon>
        <taxon>Schizosaccharomycetales</taxon>
        <taxon>Schizosaccharomycetaceae</taxon>
        <taxon>Schizosaccharomyces</taxon>
    </lineage>
</organism>
<reference key="1">
    <citation type="journal article" date="1997" name="Bioorg. Khim.">
        <title>The first member of a novel family of eukaryotic transcription factors detected by the heterospecific complementation.</title>
        <authorList>
            <person name="Shpakovskii G.V."/>
            <person name="Lebedenko E.N."/>
        </authorList>
    </citation>
    <scope>NUCLEOTIDE SEQUENCE [MRNA]</scope>
    <source>
        <strain>972 / ATCC 24843</strain>
    </source>
</reference>
<reference key="2">
    <citation type="journal article" date="1998" name="Bioorg. Khim.">
        <title>Exon-intron structure of the fet5+ gene of Schizosaccharomyces pombe and physical mapping of genome encompassing regions.</title>
        <authorList>
            <person name="Shpakovskii G.V."/>
            <person name="Lebedenko E.N."/>
        </authorList>
    </citation>
    <scope>NUCLEOTIDE SEQUENCE [GENOMIC DNA]</scope>
    <source>
        <strain>972 / ATCC 24843</strain>
    </source>
</reference>
<reference key="3">
    <citation type="journal article" date="2002" name="Nature">
        <title>The genome sequence of Schizosaccharomyces pombe.</title>
        <authorList>
            <person name="Wood V."/>
            <person name="Gwilliam R."/>
            <person name="Rajandream M.A."/>
            <person name="Lyne M.H."/>
            <person name="Lyne R."/>
            <person name="Stewart A."/>
            <person name="Sgouros J.G."/>
            <person name="Peat N."/>
            <person name="Hayles J."/>
            <person name="Baker S.G."/>
            <person name="Basham D."/>
            <person name="Bowman S."/>
            <person name="Brooks K."/>
            <person name="Brown D."/>
            <person name="Brown S."/>
            <person name="Chillingworth T."/>
            <person name="Churcher C.M."/>
            <person name="Collins M."/>
            <person name="Connor R."/>
            <person name="Cronin A."/>
            <person name="Davis P."/>
            <person name="Feltwell T."/>
            <person name="Fraser A."/>
            <person name="Gentles S."/>
            <person name="Goble A."/>
            <person name="Hamlin N."/>
            <person name="Harris D.E."/>
            <person name="Hidalgo J."/>
            <person name="Hodgson G."/>
            <person name="Holroyd S."/>
            <person name="Hornsby T."/>
            <person name="Howarth S."/>
            <person name="Huckle E.J."/>
            <person name="Hunt S."/>
            <person name="Jagels K."/>
            <person name="James K.D."/>
            <person name="Jones L."/>
            <person name="Jones M."/>
            <person name="Leather S."/>
            <person name="McDonald S."/>
            <person name="McLean J."/>
            <person name="Mooney P."/>
            <person name="Moule S."/>
            <person name="Mungall K.L."/>
            <person name="Murphy L.D."/>
            <person name="Niblett D."/>
            <person name="Odell C."/>
            <person name="Oliver K."/>
            <person name="O'Neil S."/>
            <person name="Pearson D."/>
            <person name="Quail M.A."/>
            <person name="Rabbinowitsch E."/>
            <person name="Rutherford K.M."/>
            <person name="Rutter S."/>
            <person name="Saunders D."/>
            <person name="Seeger K."/>
            <person name="Sharp S."/>
            <person name="Skelton J."/>
            <person name="Simmonds M.N."/>
            <person name="Squares R."/>
            <person name="Squares S."/>
            <person name="Stevens K."/>
            <person name="Taylor K."/>
            <person name="Taylor R.G."/>
            <person name="Tivey A."/>
            <person name="Walsh S.V."/>
            <person name="Warren T."/>
            <person name="Whitehead S."/>
            <person name="Woodward J.R."/>
            <person name="Volckaert G."/>
            <person name="Aert R."/>
            <person name="Robben J."/>
            <person name="Grymonprez B."/>
            <person name="Weltjens I."/>
            <person name="Vanstreels E."/>
            <person name="Rieger M."/>
            <person name="Schaefer M."/>
            <person name="Mueller-Auer S."/>
            <person name="Gabel C."/>
            <person name="Fuchs M."/>
            <person name="Duesterhoeft A."/>
            <person name="Fritzc C."/>
            <person name="Holzer E."/>
            <person name="Moestl D."/>
            <person name="Hilbert H."/>
            <person name="Borzym K."/>
            <person name="Langer I."/>
            <person name="Beck A."/>
            <person name="Lehrach H."/>
            <person name="Reinhardt R."/>
            <person name="Pohl T.M."/>
            <person name="Eger P."/>
            <person name="Zimmermann W."/>
            <person name="Wedler H."/>
            <person name="Wambutt R."/>
            <person name="Purnelle B."/>
            <person name="Goffeau A."/>
            <person name="Cadieu E."/>
            <person name="Dreano S."/>
            <person name="Gloux S."/>
            <person name="Lelaure V."/>
            <person name="Mottier S."/>
            <person name="Galibert F."/>
            <person name="Aves S.J."/>
            <person name="Xiang Z."/>
            <person name="Hunt C."/>
            <person name="Moore K."/>
            <person name="Hurst S.M."/>
            <person name="Lucas M."/>
            <person name="Rochet M."/>
            <person name="Gaillardin C."/>
            <person name="Tallada V.A."/>
            <person name="Garzon A."/>
            <person name="Thode G."/>
            <person name="Daga R.R."/>
            <person name="Cruzado L."/>
            <person name="Jimenez J."/>
            <person name="Sanchez M."/>
            <person name="del Rey F."/>
            <person name="Benito J."/>
            <person name="Dominguez A."/>
            <person name="Revuelta J.L."/>
            <person name="Moreno S."/>
            <person name="Armstrong J."/>
            <person name="Forsburg S.L."/>
            <person name="Cerutti L."/>
            <person name="Lowe T."/>
            <person name="McCombie W.R."/>
            <person name="Paulsen I."/>
            <person name="Potashkin J."/>
            <person name="Shpakovski G.V."/>
            <person name="Ussery D."/>
            <person name="Barrell B.G."/>
            <person name="Nurse P."/>
        </authorList>
    </citation>
    <scope>NUCLEOTIDE SEQUENCE [LARGE SCALE GENOMIC DNA]</scope>
    <source>
        <strain>972 / ATCC 24843</strain>
    </source>
</reference>
<reference key="4">
    <citation type="journal article" date="2006" name="Nat. Biotechnol.">
        <title>ORFeome cloning and global analysis of protein localization in the fission yeast Schizosaccharomyces pombe.</title>
        <authorList>
            <person name="Matsuyama A."/>
            <person name="Arai R."/>
            <person name="Yashiroda Y."/>
            <person name="Shirai A."/>
            <person name="Kamata A."/>
            <person name="Sekido S."/>
            <person name="Kobayashi Y."/>
            <person name="Hashimoto A."/>
            <person name="Hamamoto M."/>
            <person name="Hiraoka Y."/>
            <person name="Horinouchi S."/>
            <person name="Yoshida M."/>
        </authorList>
    </citation>
    <scope>SUBCELLULAR LOCATION [LARGE SCALE ANALYSIS]</scope>
</reference>
<gene>
    <name evidence="5" type="primary">fet5</name>
    <name evidence="7" type="ORF">SPAC4D7.12c</name>
</gene>
<comment type="function">
    <text evidence="1">Small GTPase required for proper nuclear import of RNA polymerase II and III (RNAPII and RNAPIII). May act at an RNAP assembly step prior to nuclear import.</text>
</comment>
<comment type="subunit">
    <text evidence="1">Heterodimers with gpn1 or gpn2. Binds to RNA polymerase II (RNAPII).</text>
</comment>
<comment type="subcellular location">
    <subcellularLocation>
        <location evidence="4">Cytoplasm</location>
    </subcellularLocation>
    <subcellularLocation>
        <location evidence="4">Nucleus</location>
    </subcellularLocation>
</comment>
<comment type="similarity">
    <text evidence="6">Belongs to the GPN-loop GTPase family.</text>
</comment>
<name>GPN3_SCHPO</name>
<sequence>MVKVAAFVCGVASSGKSTFCGALMSYMKSVGRSCHLVNLDPAAENFEWEPTVDIRDLISIDDVMEELDYGPNGGLIYCFEFLMENLDWLNEEIGDYDEDYLIFDMPGQIELYTHVPILPALIRHLQVTLNFRPCAVYLLESQFLVDRTKFFAGVLSAMSAMVMMEVPHINLLSKMDLLKDNNNITKAELKRFLNTDPLLLTGEINETTNPKFHELNRCIVQLIDDFNMVNFLPLESGNEESVSRVLSYIDDATQWYEDQEPKDPDRFEADDLEDDE</sequence>
<accession>O14443</accession>
<feature type="chain" id="PRO_0000255594" description="GPN-loop GTPase 3">
    <location>
        <begin position="1"/>
        <end position="276"/>
    </location>
</feature>
<feature type="region of interest" description="Disordered" evidence="3">
    <location>
        <begin position="257"/>
        <end position="276"/>
    </location>
</feature>
<feature type="short sequence motif" description="Gly-Pro-Asn (GPN)-loop; involved in dimer interface" evidence="2">
    <location>
        <begin position="70"/>
        <end position="72"/>
    </location>
</feature>
<feature type="compositionally biased region" description="Basic and acidic residues" evidence="3">
    <location>
        <begin position="259"/>
        <end position="269"/>
    </location>
</feature>
<feature type="binding site" evidence="2">
    <location>
        <begin position="13"/>
        <end position="18"/>
    </location>
    <ligand>
        <name>GTP</name>
        <dbReference type="ChEBI" id="CHEBI:37565"/>
    </ligand>
</feature>
<feature type="binding site" evidence="2">
    <location>
        <begin position="173"/>
        <end position="176"/>
    </location>
    <ligand>
        <name>GTP</name>
        <dbReference type="ChEBI" id="CHEBI:37565"/>
    </ligand>
</feature>
<feature type="site" description="Stabilizes the phosphate intermediate; shared with dimeric partner" evidence="2">
    <location>
        <position position="72"/>
    </location>
</feature>
<dbReference type="EC" id="3.6.5.-" evidence="1"/>
<dbReference type="EMBL" id="U80218">
    <property type="protein sequence ID" value="AAC49837.1"/>
    <property type="molecule type" value="mRNA"/>
</dbReference>
<dbReference type="EMBL" id="AF020907">
    <property type="protein sequence ID" value="AAD01680.1"/>
    <property type="molecule type" value="Genomic_DNA"/>
</dbReference>
<dbReference type="EMBL" id="CU329670">
    <property type="protein sequence ID" value="CAB11284.1"/>
    <property type="molecule type" value="Genomic_DNA"/>
</dbReference>
<dbReference type="PIR" id="T43541">
    <property type="entry name" value="T43541"/>
</dbReference>
<dbReference type="RefSeq" id="NP_594965.1">
    <property type="nucleotide sequence ID" value="NM_001020396.2"/>
</dbReference>
<dbReference type="SMR" id="O14443"/>
<dbReference type="FunCoup" id="O14443">
    <property type="interactions" value="750"/>
</dbReference>
<dbReference type="STRING" id="284812.O14443"/>
<dbReference type="iPTMnet" id="O14443"/>
<dbReference type="PaxDb" id="4896-SPAC4D7.12c.1"/>
<dbReference type="EnsemblFungi" id="SPAC4D7.12c.1">
    <property type="protein sequence ID" value="SPAC4D7.12c.1:pep"/>
    <property type="gene ID" value="SPAC4D7.12c"/>
</dbReference>
<dbReference type="GeneID" id="2543397"/>
<dbReference type="KEGG" id="spo:2543397"/>
<dbReference type="PomBase" id="SPAC4D7.12c">
    <property type="gene designation" value="fet5"/>
</dbReference>
<dbReference type="VEuPathDB" id="FungiDB:SPAC4D7.12c"/>
<dbReference type="eggNOG" id="KOG1534">
    <property type="taxonomic scope" value="Eukaryota"/>
</dbReference>
<dbReference type="HOGENOM" id="CLU_037460_0_0_1"/>
<dbReference type="InParanoid" id="O14443"/>
<dbReference type="OMA" id="LYTHMTV"/>
<dbReference type="PhylomeDB" id="O14443"/>
<dbReference type="PRO" id="PR:O14443"/>
<dbReference type="Proteomes" id="UP000002485">
    <property type="component" value="Chromosome I"/>
</dbReference>
<dbReference type="GO" id="GO:0005829">
    <property type="term" value="C:cytosol"/>
    <property type="evidence" value="ECO:0007005"/>
    <property type="project" value="PomBase"/>
</dbReference>
<dbReference type="GO" id="GO:0005634">
    <property type="term" value="C:nucleus"/>
    <property type="evidence" value="ECO:0007005"/>
    <property type="project" value="PomBase"/>
</dbReference>
<dbReference type="GO" id="GO:0005525">
    <property type="term" value="F:GTP binding"/>
    <property type="evidence" value="ECO:0007669"/>
    <property type="project" value="UniProtKB-KW"/>
</dbReference>
<dbReference type="GO" id="GO:0003924">
    <property type="term" value="F:GTPase activity"/>
    <property type="evidence" value="ECO:0000318"/>
    <property type="project" value="GO_Central"/>
</dbReference>
<dbReference type="GO" id="GO:0006606">
    <property type="term" value="P:protein import into nucleus"/>
    <property type="evidence" value="ECO:0000266"/>
    <property type="project" value="PomBase"/>
</dbReference>
<dbReference type="CDD" id="cd17872">
    <property type="entry name" value="GPN3"/>
    <property type="match status" value="1"/>
</dbReference>
<dbReference type="FunFam" id="3.40.50.300:FF:000552">
    <property type="entry name" value="GPN-loop GTPase 3"/>
    <property type="match status" value="1"/>
</dbReference>
<dbReference type="Gene3D" id="3.40.50.300">
    <property type="entry name" value="P-loop containing nucleotide triphosphate hydrolases"/>
    <property type="match status" value="1"/>
</dbReference>
<dbReference type="InterPro" id="IPR004130">
    <property type="entry name" value="Gpn"/>
</dbReference>
<dbReference type="InterPro" id="IPR030228">
    <property type="entry name" value="Gpn3"/>
</dbReference>
<dbReference type="InterPro" id="IPR027417">
    <property type="entry name" value="P-loop_NTPase"/>
</dbReference>
<dbReference type="PANTHER" id="PTHR21231:SF7">
    <property type="entry name" value="GPN-LOOP GTPASE 3"/>
    <property type="match status" value="1"/>
</dbReference>
<dbReference type="PANTHER" id="PTHR21231">
    <property type="entry name" value="XPA-BINDING PROTEIN 1-RELATED"/>
    <property type="match status" value="1"/>
</dbReference>
<dbReference type="Pfam" id="PF03029">
    <property type="entry name" value="ATP_bind_1"/>
    <property type="match status" value="1"/>
</dbReference>
<dbReference type="SUPFAM" id="SSF52540">
    <property type="entry name" value="P-loop containing nucleoside triphosphate hydrolases"/>
    <property type="match status" value="1"/>
</dbReference>
<evidence type="ECO:0000250" key="1">
    <source>
        <dbReference type="UniProtKB" id="Q06543"/>
    </source>
</evidence>
<evidence type="ECO:0000250" key="2">
    <source>
        <dbReference type="UniProtKB" id="Q9UYR9"/>
    </source>
</evidence>
<evidence type="ECO:0000256" key="3">
    <source>
        <dbReference type="SAM" id="MobiDB-lite"/>
    </source>
</evidence>
<evidence type="ECO:0000269" key="4">
    <source>
    </source>
</evidence>
<evidence type="ECO:0000303" key="5">
    <source>
    </source>
</evidence>
<evidence type="ECO:0000305" key="6"/>
<evidence type="ECO:0000312" key="7">
    <source>
        <dbReference type="PomBase" id="SPAC4D7.12c"/>
    </source>
</evidence>